<comment type="function">
    <text evidence="1">Required for insertion of 4Fe-4S clusters.</text>
</comment>
<comment type="cofactor">
    <cofactor evidence="1">
        <name>iron-sulfur cluster</name>
        <dbReference type="ChEBI" id="CHEBI:30408"/>
    </cofactor>
    <text evidence="1">Binds 1 iron-sulfur cluster per subunit.</text>
</comment>
<comment type="subunit">
    <text evidence="1">Homodimer.</text>
</comment>
<comment type="similarity">
    <text evidence="1">Belongs to the HesB/IscA family.</text>
</comment>
<accession>Q1BZ43</accession>
<reference key="1">
    <citation type="submission" date="2006-05" db="EMBL/GenBank/DDBJ databases">
        <title>Complete sequence of chromosome 1 of Burkholderia cenocepacia AU 1054.</title>
        <authorList>
            <consortium name="US DOE Joint Genome Institute"/>
            <person name="Copeland A."/>
            <person name="Lucas S."/>
            <person name="Lapidus A."/>
            <person name="Barry K."/>
            <person name="Detter J.C."/>
            <person name="Glavina del Rio T."/>
            <person name="Hammon N."/>
            <person name="Israni S."/>
            <person name="Dalin E."/>
            <person name="Tice H."/>
            <person name="Pitluck S."/>
            <person name="Chain P."/>
            <person name="Malfatti S."/>
            <person name="Shin M."/>
            <person name="Vergez L."/>
            <person name="Schmutz J."/>
            <person name="Larimer F."/>
            <person name="Land M."/>
            <person name="Hauser L."/>
            <person name="Kyrpides N."/>
            <person name="Lykidis A."/>
            <person name="LiPuma J.J."/>
            <person name="Konstantinidis K."/>
            <person name="Tiedje J.M."/>
            <person name="Richardson P."/>
        </authorList>
    </citation>
    <scope>NUCLEOTIDE SEQUENCE [LARGE SCALE GENOMIC DNA]</scope>
    <source>
        <strain>AU 1054</strain>
    </source>
</reference>
<feature type="chain" id="PRO_0000311454" description="Putative iron-sulfur cluster insertion protein ErpA">
    <location>
        <begin position="1"/>
        <end position="123"/>
    </location>
</feature>
<feature type="binding site" evidence="1">
    <location>
        <position position="51"/>
    </location>
    <ligand>
        <name>iron-sulfur cluster</name>
        <dbReference type="ChEBI" id="CHEBI:30408"/>
    </ligand>
</feature>
<feature type="binding site" evidence="1">
    <location>
        <position position="115"/>
    </location>
    <ligand>
        <name>iron-sulfur cluster</name>
        <dbReference type="ChEBI" id="CHEBI:30408"/>
    </ligand>
</feature>
<feature type="binding site" evidence="1">
    <location>
        <position position="117"/>
    </location>
    <ligand>
        <name>iron-sulfur cluster</name>
        <dbReference type="ChEBI" id="CHEBI:30408"/>
    </ligand>
</feature>
<proteinExistence type="inferred from homology"/>
<evidence type="ECO:0000255" key="1">
    <source>
        <dbReference type="HAMAP-Rule" id="MF_01380"/>
    </source>
</evidence>
<gene>
    <name evidence="1" type="primary">erpA</name>
    <name type="ordered locus">Bcen_0198</name>
</gene>
<name>ERPA_BURO1</name>
<keyword id="KW-0408">Iron</keyword>
<keyword id="KW-0411">Iron-sulfur</keyword>
<keyword id="KW-0479">Metal-binding</keyword>
<protein>
    <recommendedName>
        <fullName evidence="1">Putative iron-sulfur cluster insertion protein ErpA</fullName>
    </recommendedName>
</protein>
<sequence length="123" mass="13313">MNAVTETAATTTDMPLPFVFTDAAADKVKQLIDEEGNPDLKLRVFVQGGGCSGFQYGFTFDEEVNEDDTVMNKNGVQLLIDSMSYQYLVGAEIDYKDDLNGAQFVIKNPNATTTCGCGSSFSV</sequence>
<dbReference type="EMBL" id="CP000378">
    <property type="protein sequence ID" value="ABF75112.1"/>
    <property type="molecule type" value="Genomic_DNA"/>
</dbReference>
<dbReference type="SMR" id="Q1BZ43"/>
<dbReference type="HOGENOM" id="CLU_069054_5_3_4"/>
<dbReference type="GO" id="GO:0051537">
    <property type="term" value="F:2 iron, 2 sulfur cluster binding"/>
    <property type="evidence" value="ECO:0007669"/>
    <property type="project" value="TreeGrafter"/>
</dbReference>
<dbReference type="GO" id="GO:0051539">
    <property type="term" value="F:4 iron, 4 sulfur cluster binding"/>
    <property type="evidence" value="ECO:0007669"/>
    <property type="project" value="TreeGrafter"/>
</dbReference>
<dbReference type="GO" id="GO:0005506">
    <property type="term" value="F:iron ion binding"/>
    <property type="evidence" value="ECO:0007669"/>
    <property type="project" value="UniProtKB-UniRule"/>
</dbReference>
<dbReference type="GO" id="GO:0016226">
    <property type="term" value="P:iron-sulfur cluster assembly"/>
    <property type="evidence" value="ECO:0007669"/>
    <property type="project" value="UniProtKB-UniRule"/>
</dbReference>
<dbReference type="FunFam" id="2.60.300.12:FF:000002">
    <property type="entry name" value="Iron-sulfur cluster insertion protein ErpA"/>
    <property type="match status" value="1"/>
</dbReference>
<dbReference type="Gene3D" id="2.60.300.12">
    <property type="entry name" value="HesB-like domain"/>
    <property type="match status" value="1"/>
</dbReference>
<dbReference type="HAMAP" id="MF_01380">
    <property type="entry name" value="Fe_S_insert_ErpA"/>
    <property type="match status" value="1"/>
</dbReference>
<dbReference type="InterPro" id="IPR000361">
    <property type="entry name" value="FeS_biogenesis"/>
</dbReference>
<dbReference type="InterPro" id="IPR016092">
    <property type="entry name" value="FeS_cluster_insertion"/>
</dbReference>
<dbReference type="InterPro" id="IPR017870">
    <property type="entry name" value="FeS_cluster_insertion_CS"/>
</dbReference>
<dbReference type="InterPro" id="IPR023063">
    <property type="entry name" value="FeS_cluster_insertion_RrpA"/>
</dbReference>
<dbReference type="InterPro" id="IPR035903">
    <property type="entry name" value="HesB-like_dom_sf"/>
</dbReference>
<dbReference type="NCBIfam" id="TIGR00049">
    <property type="entry name" value="iron-sulfur cluster assembly accessory protein"/>
    <property type="match status" value="1"/>
</dbReference>
<dbReference type="NCBIfam" id="NF010147">
    <property type="entry name" value="PRK13623.1"/>
    <property type="match status" value="1"/>
</dbReference>
<dbReference type="PANTHER" id="PTHR43011">
    <property type="entry name" value="IRON-SULFUR CLUSTER ASSEMBLY 2 HOMOLOG, MITOCHONDRIAL"/>
    <property type="match status" value="1"/>
</dbReference>
<dbReference type="PANTHER" id="PTHR43011:SF1">
    <property type="entry name" value="IRON-SULFUR CLUSTER ASSEMBLY 2 HOMOLOG, MITOCHONDRIAL"/>
    <property type="match status" value="1"/>
</dbReference>
<dbReference type="Pfam" id="PF01521">
    <property type="entry name" value="Fe-S_biosyn"/>
    <property type="match status" value="1"/>
</dbReference>
<dbReference type="SUPFAM" id="SSF89360">
    <property type="entry name" value="HesB-like domain"/>
    <property type="match status" value="1"/>
</dbReference>
<dbReference type="PROSITE" id="PS01152">
    <property type="entry name" value="HESB"/>
    <property type="match status" value="1"/>
</dbReference>
<organism>
    <name type="scientific">Burkholderia orbicola (strain AU 1054)</name>
    <dbReference type="NCBI Taxonomy" id="331271"/>
    <lineage>
        <taxon>Bacteria</taxon>
        <taxon>Pseudomonadati</taxon>
        <taxon>Pseudomonadota</taxon>
        <taxon>Betaproteobacteria</taxon>
        <taxon>Burkholderiales</taxon>
        <taxon>Burkholderiaceae</taxon>
        <taxon>Burkholderia</taxon>
        <taxon>Burkholderia cepacia complex</taxon>
        <taxon>Burkholderia orbicola</taxon>
    </lineage>
</organism>